<proteinExistence type="inferred from homology"/>
<dbReference type="EMBL" id="BA000028">
    <property type="protein sequence ID" value="BAC14422.1"/>
    <property type="molecule type" value="Genomic_DNA"/>
</dbReference>
<dbReference type="RefSeq" id="WP_011066859.1">
    <property type="nucleotide sequence ID" value="NC_004193.1"/>
</dbReference>
<dbReference type="SMR" id="Q8ENL5"/>
<dbReference type="STRING" id="221109.gene:10734718"/>
<dbReference type="KEGG" id="oih:OB2466"/>
<dbReference type="eggNOG" id="COG1481">
    <property type="taxonomic scope" value="Bacteria"/>
</dbReference>
<dbReference type="HOGENOM" id="CLU_053282_0_0_9"/>
<dbReference type="OrthoDB" id="401278at2"/>
<dbReference type="PhylomeDB" id="Q8ENL5"/>
<dbReference type="Proteomes" id="UP000000822">
    <property type="component" value="Chromosome"/>
</dbReference>
<dbReference type="GO" id="GO:0003677">
    <property type="term" value="F:DNA binding"/>
    <property type="evidence" value="ECO:0007669"/>
    <property type="project" value="UniProtKB-UniRule"/>
</dbReference>
<dbReference type="GO" id="GO:0051301">
    <property type="term" value="P:cell division"/>
    <property type="evidence" value="ECO:0007669"/>
    <property type="project" value="UniProtKB-UniRule"/>
</dbReference>
<dbReference type="GO" id="GO:0043937">
    <property type="term" value="P:regulation of sporulation"/>
    <property type="evidence" value="ECO:0007669"/>
    <property type="project" value="InterPro"/>
</dbReference>
<dbReference type="FunFam" id="3.10.28.10:FF:000002">
    <property type="entry name" value="Probable cell division protein WhiA"/>
    <property type="match status" value="1"/>
</dbReference>
<dbReference type="Gene3D" id="3.10.28.10">
    <property type="entry name" value="Homing endonucleases"/>
    <property type="match status" value="1"/>
</dbReference>
<dbReference type="HAMAP" id="MF_01420">
    <property type="entry name" value="HTH_type_WhiA"/>
    <property type="match status" value="1"/>
</dbReference>
<dbReference type="InterPro" id="IPR027434">
    <property type="entry name" value="Homing_endonucl"/>
</dbReference>
<dbReference type="InterPro" id="IPR018478">
    <property type="entry name" value="Sporu_reg_WhiA_N_dom"/>
</dbReference>
<dbReference type="InterPro" id="IPR003802">
    <property type="entry name" value="Sporulation_regulator_WhiA"/>
</dbReference>
<dbReference type="InterPro" id="IPR023054">
    <property type="entry name" value="Sporulation_regulator_WhiA_C"/>
</dbReference>
<dbReference type="InterPro" id="IPR039518">
    <property type="entry name" value="WhiA_LAGLIDADG_dom"/>
</dbReference>
<dbReference type="NCBIfam" id="TIGR00647">
    <property type="entry name" value="DNA_bind_WhiA"/>
    <property type="match status" value="1"/>
</dbReference>
<dbReference type="PANTHER" id="PTHR37307">
    <property type="entry name" value="CELL DIVISION PROTEIN WHIA-RELATED"/>
    <property type="match status" value="1"/>
</dbReference>
<dbReference type="PANTHER" id="PTHR37307:SF1">
    <property type="entry name" value="CELL DIVISION PROTEIN WHIA-RELATED"/>
    <property type="match status" value="1"/>
</dbReference>
<dbReference type="Pfam" id="PF02650">
    <property type="entry name" value="HTH_WhiA"/>
    <property type="match status" value="1"/>
</dbReference>
<dbReference type="Pfam" id="PF14527">
    <property type="entry name" value="LAGLIDADG_WhiA"/>
    <property type="match status" value="1"/>
</dbReference>
<dbReference type="Pfam" id="PF10298">
    <property type="entry name" value="WhiA_N"/>
    <property type="match status" value="1"/>
</dbReference>
<dbReference type="SUPFAM" id="SSF55608">
    <property type="entry name" value="Homing endonucleases"/>
    <property type="match status" value="1"/>
</dbReference>
<reference key="1">
    <citation type="journal article" date="2002" name="Nucleic Acids Res.">
        <title>Genome sequence of Oceanobacillus iheyensis isolated from the Iheya Ridge and its unexpected adaptive capabilities to extreme environments.</title>
        <authorList>
            <person name="Takami H."/>
            <person name="Takaki Y."/>
            <person name="Uchiyama I."/>
        </authorList>
    </citation>
    <scope>NUCLEOTIDE SEQUENCE [LARGE SCALE GENOMIC DNA]</scope>
    <source>
        <strain>DSM 14371 / CIP 107618 / JCM 11309 / KCTC 3954 / HTE831</strain>
    </source>
</reference>
<name>WHIA_OCEIH</name>
<keyword id="KW-0131">Cell cycle</keyword>
<keyword id="KW-0132">Cell division</keyword>
<keyword id="KW-0238">DNA-binding</keyword>
<keyword id="KW-1185">Reference proteome</keyword>
<sequence length="314" mass="35891">MSFASEIKKELTAIETEECCQLAELAALVRMNGAISISRQGYSLDVQTENAAIARRIYTLIKDNYSIAVELLVRKKMKLKKNNVYIVRLKEEVQLLLEELDLIINQYTIVRTISNKYLEKDCCKKSYLRGAFLAGGSMNNPETSSYHLEIFNYYEEHAESLQKLLNSYGLHARLLARKNGFIVYMKEAEKITEFLSIIGAHKALFKFEDVRIVRDMRNSVNRLVNCETANLNKTIGAAFRQIENIKLIERTVGLDQLPDKLQEIAKLRIQYEDVSLKELGELVTSGAISKSGVNHRLKKIDEFAEKIKRGESIT</sequence>
<comment type="function">
    <text evidence="1">Involved in cell division and chromosome segregation.</text>
</comment>
<comment type="similarity">
    <text evidence="1">Belongs to the WhiA family.</text>
</comment>
<evidence type="ECO:0000255" key="1">
    <source>
        <dbReference type="HAMAP-Rule" id="MF_01420"/>
    </source>
</evidence>
<protein>
    <recommendedName>
        <fullName evidence="1">Probable cell division protein WhiA</fullName>
    </recommendedName>
</protein>
<organism>
    <name type="scientific">Oceanobacillus iheyensis (strain DSM 14371 / CIP 107618 / JCM 11309 / KCTC 3954 / HTE831)</name>
    <dbReference type="NCBI Taxonomy" id="221109"/>
    <lineage>
        <taxon>Bacteria</taxon>
        <taxon>Bacillati</taxon>
        <taxon>Bacillota</taxon>
        <taxon>Bacilli</taxon>
        <taxon>Bacillales</taxon>
        <taxon>Bacillaceae</taxon>
        <taxon>Oceanobacillus</taxon>
    </lineage>
</organism>
<accession>Q8ENL5</accession>
<feature type="chain" id="PRO_0000376541" description="Probable cell division protein WhiA">
    <location>
        <begin position="1"/>
        <end position="314"/>
    </location>
</feature>
<feature type="DNA-binding region" description="H-T-H motif" evidence="1">
    <location>
        <begin position="275"/>
        <end position="309"/>
    </location>
</feature>
<gene>
    <name evidence="1" type="primary">whiA</name>
    <name type="ordered locus">OB2466</name>
</gene>